<evidence type="ECO:0000255" key="1"/>
<evidence type="ECO:0000305" key="2"/>
<protein>
    <recommendedName>
        <fullName evidence="2">Alpha-2-macroglobulin homolog</fullName>
    </recommendedName>
</protein>
<dbReference type="EMBL" id="AE004091">
    <property type="protein sequence ID" value="AAG07877.1"/>
    <property type="molecule type" value="Genomic_DNA"/>
</dbReference>
<dbReference type="PIR" id="F83085">
    <property type="entry name" value="F83085"/>
</dbReference>
<dbReference type="RefSeq" id="NP_253179.1">
    <property type="nucleotide sequence ID" value="NC_002516.2"/>
</dbReference>
<dbReference type="SMR" id="Q9HVT2"/>
<dbReference type="FunCoup" id="Q9HVT2">
    <property type="interactions" value="72"/>
</dbReference>
<dbReference type="STRING" id="208964.PA4489"/>
<dbReference type="PaxDb" id="208964-PA4489"/>
<dbReference type="DNASU" id="881072"/>
<dbReference type="GeneID" id="881072"/>
<dbReference type="KEGG" id="pae:PA4489"/>
<dbReference type="PATRIC" id="fig|208964.12.peg.4699"/>
<dbReference type="PseudoCAP" id="PA4489"/>
<dbReference type="HOGENOM" id="CLU_004561_0_0_6"/>
<dbReference type="InParanoid" id="Q9HVT2"/>
<dbReference type="OrthoDB" id="9767116at2"/>
<dbReference type="PhylomeDB" id="Q9HVT2"/>
<dbReference type="BioCyc" id="PAER208964:G1FZ6-4578-MONOMER"/>
<dbReference type="Proteomes" id="UP000002438">
    <property type="component" value="Chromosome"/>
</dbReference>
<dbReference type="GO" id="GO:0004866">
    <property type="term" value="F:endopeptidase inhibitor activity"/>
    <property type="evidence" value="ECO:0007669"/>
    <property type="project" value="InterPro"/>
</dbReference>
<dbReference type="Gene3D" id="1.50.10.20">
    <property type="match status" value="1"/>
</dbReference>
<dbReference type="Gene3D" id="2.20.130.20">
    <property type="match status" value="1"/>
</dbReference>
<dbReference type="Gene3D" id="2.60.40.1930">
    <property type="match status" value="1"/>
</dbReference>
<dbReference type="InterPro" id="IPR011625">
    <property type="entry name" value="A2M_N_BRD"/>
</dbReference>
<dbReference type="InterPro" id="IPR047565">
    <property type="entry name" value="Alpha-macroglob_thiol-ester_cl"/>
</dbReference>
<dbReference type="InterPro" id="IPR001599">
    <property type="entry name" value="Macroglobln_a2"/>
</dbReference>
<dbReference type="InterPro" id="IPR002890">
    <property type="entry name" value="MG2"/>
</dbReference>
<dbReference type="InterPro" id="IPR008930">
    <property type="entry name" value="Terpenoid_cyclase/PrenylTrfase"/>
</dbReference>
<dbReference type="InterPro" id="IPR051802">
    <property type="entry name" value="YfhM-like"/>
</dbReference>
<dbReference type="PANTHER" id="PTHR40094">
    <property type="entry name" value="ALPHA-2-MACROGLOBULIN HOMOLOG"/>
    <property type="match status" value="1"/>
</dbReference>
<dbReference type="PANTHER" id="PTHR40094:SF1">
    <property type="entry name" value="UBIQUITIN DOMAIN-CONTAINING PROTEIN"/>
    <property type="match status" value="1"/>
</dbReference>
<dbReference type="Pfam" id="PF00207">
    <property type="entry name" value="A2M"/>
    <property type="match status" value="1"/>
</dbReference>
<dbReference type="Pfam" id="PF07703">
    <property type="entry name" value="A2M_BRD"/>
    <property type="match status" value="1"/>
</dbReference>
<dbReference type="Pfam" id="PF01835">
    <property type="entry name" value="MG2"/>
    <property type="match status" value="1"/>
</dbReference>
<dbReference type="SMART" id="SM01360">
    <property type="entry name" value="A2M"/>
    <property type="match status" value="1"/>
</dbReference>
<dbReference type="SMART" id="SM01359">
    <property type="entry name" value="A2M_N_2"/>
    <property type="match status" value="1"/>
</dbReference>
<dbReference type="SMART" id="SM01419">
    <property type="entry name" value="Thiol-ester_cl"/>
    <property type="match status" value="1"/>
</dbReference>
<dbReference type="SUPFAM" id="SSF48239">
    <property type="entry name" value="Terpenoid cyclases/Protein prenyltransferases"/>
    <property type="match status" value="1"/>
</dbReference>
<comment type="similarity">
    <text evidence="2">Belongs to the protease inhibitor I39 (alpha-2-macroglobulin) family. Bacterial alpha-2-macroglobulin subfamily.</text>
</comment>
<comment type="caution">
    <text evidence="2">Lacks the conserved thioester bond that is characteristic of the alpha-2-macroglobulins.</text>
</comment>
<organism>
    <name type="scientific">Pseudomonas aeruginosa (strain ATCC 15692 / DSM 22644 / CIP 104116 / JCM 14847 / LMG 12228 / 1C / PRS 101 / PAO1)</name>
    <dbReference type="NCBI Taxonomy" id="208964"/>
    <lineage>
        <taxon>Bacteria</taxon>
        <taxon>Pseudomonadati</taxon>
        <taxon>Pseudomonadota</taxon>
        <taxon>Gammaproteobacteria</taxon>
        <taxon>Pseudomonadales</taxon>
        <taxon>Pseudomonadaceae</taxon>
        <taxon>Pseudomonas</taxon>
    </lineage>
</organism>
<accession>Q9HVT2</accession>
<proteinExistence type="inferred from homology"/>
<reference key="1">
    <citation type="journal article" date="2000" name="Nature">
        <title>Complete genome sequence of Pseudomonas aeruginosa PAO1, an opportunistic pathogen.</title>
        <authorList>
            <person name="Stover C.K."/>
            <person name="Pham X.-Q.T."/>
            <person name="Erwin A.L."/>
            <person name="Mizoguchi S.D."/>
            <person name="Warrener P."/>
            <person name="Hickey M.J."/>
            <person name="Brinkman F.S.L."/>
            <person name="Hufnagle W.O."/>
            <person name="Kowalik D.J."/>
            <person name="Lagrou M."/>
            <person name="Garber R.L."/>
            <person name="Goltry L."/>
            <person name="Tolentino E."/>
            <person name="Westbrock-Wadman S."/>
            <person name="Yuan Y."/>
            <person name="Brody L.L."/>
            <person name="Coulter S.N."/>
            <person name="Folger K.R."/>
            <person name="Kas A."/>
            <person name="Larbig K."/>
            <person name="Lim R.M."/>
            <person name="Smith K.A."/>
            <person name="Spencer D.H."/>
            <person name="Wong G.K.-S."/>
            <person name="Wu Z."/>
            <person name="Paulsen I.T."/>
            <person name="Reizer J."/>
            <person name="Saier M.H. Jr."/>
            <person name="Hancock R.E.W."/>
            <person name="Lory S."/>
            <person name="Olson M.V."/>
        </authorList>
    </citation>
    <scope>NUCLEOTIDE SEQUENCE [LARGE SCALE GENOMIC DNA]</scope>
    <source>
        <strain>ATCC 15692 / DSM 22644 / CIP 104116 / JCM 14847 / LMG 12228 / 1C / PRS 101 / PAO1</strain>
    </source>
</reference>
<gene>
    <name type="ordered locus">PA4489</name>
</gene>
<feature type="signal peptide" evidence="1">
    <location>
        <begin position="1"/>
        <end position="26"/>
    </location>
</feature>
<feature type="chain" id="PRO_0000036242" description="Alpha-2-macroglobulin homolog">
    <location>
        <begin position="27"/>
        <end position="1516"/>
    </location>
</feature>
<keyword id="KW-1185">Reference proteome</keyword>
<keyword id="KW-0732">Signal</keyword>
<name>A2MGH_PSEAE</name>
<sequence>MSNLRRFSRSLAVAALVLLPFAAVQAEDTVEPSGYTPMAGESFFLLADSSFATDEEARVRLEAPGRDYRRYRMEPYGGVDVRLYRIEQPLEFLKRQKNLHRVLAEGQFKGEGLSNTLAYLWDNWYRKSRRVMQRAFSYESRQQVTEAVPELKMGNAMTAPTPYDAQPQYAPIPGLPLVSQFRYPLWDAKPIEPPQDVKLAGSSSEFINVVPGNVYIPLGKLKPGLYLVEALVGKYRATTVVFVSNSVAVSKVAGDELLVWTARKHEGTPVPDTKVLWTDGLGVMSSGNTDADGLLRLKHASPERSYVIGEDREGGVFVSENFYYDSEIYDTKIYAFTDRPLYRPGDWVSLKMVGREFKDARQSQAAASAPVRLSVIDASGTVLQSLDLRFDAKSGANGRFQLPENAVAGGYELRFDYRGQTYSSAFRVAEYIKPHFEVALDLAKPDFKTAEPVKGEIVLLYPDGKPVANARLQLSLRAQQLSMVDNELQYLGQFPVELSSTELTTDGKGRAAIELPPAEKPSRYMLTIFASDGAAYRVKTSKEILIERGAARYRLSAPQRFSAAGEKVEFSYASEQPTPLKPSSYQWIRLEDRATDSGPVADGRFALTFERPGTYSVELRDDKGQLLGATGHSVSGEGVKSVPGTVEVVFDKPEYRTGEEASALITFPEPVEDALLSLERDKVEATALLSKGADWLRLEKLNPTQYRVWIPVREEFSPNLTFSVLYTKGGDYSFQNAGIKVGMPQVEIDIATDKERYEPGETVTVTLATRFAGKPVSSHLTVSVVDEMVYALQAEIAPGIDQFFYHPRRNNVRTSASLAFISYDVALPGSTSAPGRANRSERGVKVLERPRREDVDTAAWQPELVTDAQGKASFSFRMPDSLTRWRITARAIDDNGQVGQKKQFLRSEKPLYLKWSGPTRFRQGDQPDLGLFVFNQGEQPVKAELLSGPPGSQRSQTLELAKGVNYIPLAQQPLSDGDWSAELRQDGQVRDRLAVRFNLLADGWQVEQMQNLSLAAASNPLQLPADARDVRLRLADGPAAAYLGNLDDLLEYPYGGVEQTASQLLPLSIAYPALAGGEPRIRDRLRLIMQNSRLRLVQMAGPDAWFAWWGGDVDGDAFLTAYAYYADWYASRALEIQLPAEHWQRILEPYAKQATQTPLLQRALILAFARDMQLPVNTLLGGLLNDLANAGEGQARAEPLEADDGLVLGDPDSAVGLAAARVLAVDLARQLRVAVPAPLAAQAETATQRLREAGLPFTDALLASRSAVDGQQASALLQRLAPAQSTLERALALTWLQGALAQAPQGKLPQPPKDWQAQRGASGETYWQWRGRGIPSWVDLDEAPARPLPVALSYRSAQAPSGQLPVQISRRLLRLVPGEGAFEFKVEEVGDKPLSSDELYLDEVTLNVPEDTALRYGMLELPLPPGADVERTTWGIKISGLAGDEATTLERARNEPGELFYGVPVDSLSGEQRFRHLVRFSQKGSFNLPPARYLRLYAPEQQALEAKPALAKVKVE</sequence>